<name>NQOR_GEOMG</name>
<organism>
    <name type="scientific">Geobacter metallireducens (strain ATCC 53774 / DSM 7210 / GS-15)</name>
    <dbReference type="NCBI Taxonomy" id="269799"/>
    <lineage>
        <taxon>Bacteria</taxon>
        <taxon>Pseudomonadati</taxon>
        <taxon>Thermodesulfobacteriota</taxon>
        <taxon>Desulfuromonadia</taxon>
        <taxon>Geobacterales</taxon>
        <taxon>Geobacteraceae</taxon>
        <taxon>Geobacter</taxon>
    </lineage>
</organism>
<accession>Q39XL1</accession>
<evidence type="ECO:0000255" key="1">
    <source>
        <dbReference type="HAMAP-Rule" id="MF_01017"/>
    </source>
</evidence>
<protein>
    <recommendedName>
        <fullName evidence="1">NAD(P)H dehydrogenase (quinone)</fullName>
        <ecNumber evidence="1">1.6.5.2</ecNumber>
    </recommendedName>
    <alternativeName>
        <fullName>Flavoprotein WrbA</fullName>
    </alternativeName>
    <alternativeName>
        <fullName evidence="1">NAD(P)H:quinone oxidoreductase</fullName>
        <shortName evidence="1">NQO</shortName>
    </alternativeName>
</protein>
<sequence length="203" mass="21538">MKVLIPFYSMYGHIYRMAEAVAEGVREVSGAEAVLRRVPETLPTDVLQKMGAVEPQKAFAHIPVCTVDELAAADAIIFGTPTRFGNMCGQMRQFLDATGGLWVKGGLVGKAGGVFTSSATQHGGQESTILTFHTFLLHQGMVLVGLPYAFAGQMRIDEITGGSPYGASTIAGGQGERLPSENELAGARYQGKYIAEIAAKLKG</sequence>
<dbReference type="EC" id="1.6.5.2" evidence="1"/>
<dbReference type="EMBL" id="CP000148">
    <property type="protein sequence ID" value="ABB31013.1"/>
    <property type="molecule type" value="Genomic_DNA"/>
</dbReference>
<dbReference type="SMR" id="Q39XL1"/>
<dbReference type="STRING" id="269799.Gmet_0771"/>
<dbReference type="KEGG" id="gme:Gmet_0771"/>
<dbReference type="eggNOG" id="COG0655">
    <property type="taxonomic scope" value="Bacteria"/>
</dbReference>
<dbReference type="HOGENOM" id="CLU_051402_0_2_7"/>
<dbReference type="Proteomes" id="UP000007073">
    <property type="component" value="Chromosome"/>
</dbReference>
<dbReference type="GO" id="GO:0016020">
    <property type="term" value="C:membrane"/>
    <property type="evidence" value="ECO:0007669"/>
    <property type="project" value="TreeGrafter"/>
</dbReference>
<dbReference type="GO" id="GO:0050660">
    <property type="term" value="F:flavin adenine dinucleotide binding"/>
    <property type="evidence" value="ECO:0007669"/>
    <property type="project" value="UniProtKB-UniRule"/>
</dbReference>
<dbReference type="GO" id="GO:0010181">
    <property type="term" value="F:FMN binding"/>
    <property type="evidence" value="ECO:0007669"/>
    <property type="project" value="InterPro"/>
</dbReference>
<dbReference type="GO" id="GO:0051287">
    <property type="term" value="F:NAD binding"/>
    <property type="evidence" value="ECO:0007669"/>
    <property type="project" value="UniProtKB-UniRule"/>
</dbReference>
<dbReference type="GO" id="GO:0050136">
    <property type="term" value="F:NADH:ubiquinone reductase (non-electrogenic) activity"/>
    <property type="evidence" value="ECO:0007669"/>
    <property type="project" value="RHEA"/>
</dbReference>
<dbReference type="GO" id="GO:0050661">
    <property type="term" value="F:NADP binding"/>
    <property type="evidence" value="ECO:0007669"/>
    <property type="project" value="UniProtKB-UniRule"/>
</dbReference>
<dbReference type="GO" id="GO:0008753">
    <property type="term" value="F:NADPH dehydrogenase (quinone) activity"/>
    <property type="evidence" value="ECO:0007669"/>
    <property type="project" value="RHEA"/>
</dbReference>
<dbReference type="FunFam" id="3.40.50.360:FF:000001">
    <property type="entry name" value="NAD(P)H dehydrogenase (Quinone) FQR1-like"/>
    <property type="match status" value="1"/>
</dbReference>
<dbReference type="Gene3D" id="3.40.50.360">
    <property type="match status" value="1"/>
</dbReference>
<dbReference type="HAMAP" id="MF_01017">
    <property type="entry name" value="NQOR"/>
    <property type="match status" value="1"/>
</dbReference>
<dbReference type="InterPro" id="IPR008254">
    <property type="entry name" value="Flavodoxin/NO_synth"/>
</dbReference>
<dbReference type="InterPro" id="IPR029039">
    <property type="entry name" value="Flavoprotein-like_sf"/>
</dbReference>
<dbReference type="InterPro" id="IPR010089">
    <property type="entry name" value="Flavoprotein_WrbA-like"/>
</dbReference>
<dbReference type="InterPro" id="IPR005025">
    <property type="entry name" value="FMN_Rdtase-like_dom"/>
</dbReference>
<dbReference type="InterPro" id="IPR037513">
    <property type="entry name" value="NQO"/>
</dbReference>
<dbReference type="NCBIfam" id="TIGR01755">
    <property type="entry name" value="flav_wrbA"/>
    <property type="match status" value="1"/>
</dbReference>
<dbReference type="NCBIfam" id="NF002999">
    <property type="entry name" value="PRK03767.1"/>
    <property type="match status" value="1"/>
</dbReference>
<dbReference type="PANTHER" id="PTHR30546">
    <property type="entry name" value="FLAVODOXIN-RELATED PROTEIN WRBA-RELATED"/>
    <property type="match status" value="1"/>
</dbReference>
<dbReference type="PANTHER" id="PTHR30546:SF23">
    <property type="entry name" value="FLAVOPROTEIN-LIKE PROTEIN YCP4-RELATED"/>
    <property type="match status" value="1"/>
</dbReference>
<dbReference type="Pfam" id="PF03358">
    <property type="entry name" value="FMN_red"/>
    <property type="match status" value="1"/>
</dbReference>
<dbReference type="SUPFAM" id="SSF52218">
    <property type="entry name" value="Flavoproteins"/>
    <property type="match status" value="1"/>
</dbReference>
<dbReference type="PROSITE" id="PS50902">
    <property type="entry name" value="FLAVODOXIN_LIKE"/>
    <property type="match status" value="1"/>
</dbReference>
<feature type="chain" id="PRO_0000291016" description="NAD(P)H dehydrogenase (quinone)">
    <location>
        <begin position="1"/>
        <end position="203"/>
    </location>
</feature>
<feature type="domain" description="Flavodoxin-like" evidence="1">
    <location>
        <begin position="3"/>
        <end position="194"/>
    </location>
</feature>
<feature type="binding site" evidence="1">
    <location>
        <begin position="9"/>
        <end position="14"/>
    </location>
    <ligand>
        <name>FMN</name>
        <dbReference type="ChEBI" id="CHEBI:58210"/>
    </ligand>
</feature>
<feature type="binding site" evidence="1">
    <location>
        <position position="11"/>
    </location>
    <ligand>
        <name>NAD(+)</name>
        <dbReference type="ChEBI" id="CHEBI:57540"/>
    </ligand>
</feature>
<feature type="binding site" evidence="1">
    <location>
        <begin position="82"/>
        <end position="84"/>
    </location>
    <ligand>
        <name>FMN</name>
        <dbReference type="ChEBI" id="CHEBI:58210"/>
    </ligand>
</feature>
<feature type="binding site" evidence="1">
    <location>
        <position position="102"/>
    </location>
    <ligand>
        <name>substrate</name>
    </ligand>
</feature>
<feature type="binding site" evidence="1">
    <location>
        <begin position="117"/>
        <end position="123"/>
    </location>
    <ligand>
        <name>FMN</name>
        <dbReference type="ChEBI" id="CHEBI:58210"/>
    </ligand>
</feature>
<feature type="binding site" evidence="1">
    <location>
        <position position="138"/>
    </location>
    <ligand>
        <name>FMN</name>
        <dbReference type="ChEBI" id="CHEBI:58210"/>
    </ligand>
</feature>
<proteinExistence type="inferred from homology"/>
<reference key="1">
    <citation type="journal article" date="2009" name="BMC Microbiol.">
        <title>The genome sequence of Geobacter metallireducens: features of metabolism, physiology and regulation common and dissimilar to Geobacter sulfurreducens.</title>
        <authorList>
            <person name="Aklujkar M."/>
            <person name="Krushkal J."/>
            <person name="DiBartolo G."/>
            <person name="Lapidus A."/>
            <person name="Land M.L."/>
            <person name="Lovley D.R."/>
        </authorList>
    </citation>
    <scope>NUCLEOTIDE SEQUENCE [LARGE SCALE GENOMIC DNA]</scope>
    <source>
        <strain>ATCC 53774 / DSM 7210 / GS-15</strain>
    </source>
</reference>
<comment type="catalytic activity">
    <reaction evidence="1">
        <text>a quinone + NADH + H(+) = a quinol + NAD(+)</text>
        <dbReference type="Rhea" id="RHEA:46160"/>
        <dbReference type="ChEBI" id="CHEBI:15378"/>
        <dbReference type="ChEBI" id="CHEBI:24646"/>
        <dbReference type="ChEBI" id="CHEBI:57540"/>
        <dbReference type="ChEBI" id="CHEBI:57945"/>
        <dbReference type="ChEBI" id="CHEBI:132124"/>
        <dbReference type="EC" id="1.6.5.2"/>
    </reaction>
</comment>
<comment type="catalytic activity">
    <reaction evidence="1">
        <text>a quinone + NADPH + H(+) = a quinol + NADP(+)</text>
        <dbReference type="Rhea" id="RHEA:46164"/>
        <dbReference type="ChEBI" id="CHEBI:15378"/>
        <dbReference type="ChEBI" id="CHEBI:24646"/>
        <dbReference type="ChEBI" id="CHEBI:57783"/>
        <dbReference type="ChEBI" id="CHEBI:58349"/>
        <dbReference type="ChEBI" id="CHEBI:132124"/>
        <dbReference type="EC" id="1.6.5.2"/>
    </reaction>
</comment>
<comment type="cofactor">
    <cofactor evidence="1">
        <name>FMN</name>
        <dbReference type="ChEBI" id="CHEBI:58210"/>
    </cofactor>
    <text evidence="1">Binds 1 FMN per monomer.</text>
</comment>
<comment type="similarity">
    <text evidence="1">Belongs to the WrbA family.</text>
</comment>
<gene>
    <name type="ordered locus">Gmet_0771</name>
</gene>
<keyword id="KW-0285">Flavoprotein</keyword>
<keyword id="KW-0288">FMN</keyword>
<keyword id="KW-0520">NAD</keyword>
<keyword id="KW-0521">NADP</keyword>
<keyword id="KW-0547">Nucleotide-binding</keyword>
<keyword id="KW-0560">Oxidoreductase</keyword>
<keyword id="KW-1185">Reference proteome</keyword>